<keyword id="KW-0131">Cell cycle</keyword>
<keyword id="KW-0132">Cell division</keyword>
<keyword id="KW-1185">Reference proteome</keyword>
<keyword id="KW-0717">Septation</keyword>
<organism>
    <name type="scientific">Archaeoglobus fulgidus (strain ATCC 49558 / DSM 4304 / JCM 9628 / NBRC 100126 / VC-16)</name>
    <dbReference type="NCBI Taxonomy" id="224325"/>
    <lineage>
        <taxon>Archaea</taxon>
        <taxon>Methanobacteriati</taxon>
        <taxon>Methanobacteriota</taxon>
        <taxon>Archaeoglobi</taxon>
        <taxon>Archaeoglobales</taxon>
        <taxon>Archaeoglobaceae</taxon>
        <taxon>Archaeoglobus</taxon>
    </lineage>
</organism>
<evidence type="ECO:0000255" key="1">
    <source>
        <dbReference type="HAMAP-Rule" id="MF_00819"/>
    </source>
</evidence>
<reference key="1">
    <citation type="journal article" date="1997" name="Nature">
        <title>The complete genome sequence of the hyperthermophilic, sulphate-reducing archaeon Archaeoglobus fulgidus.</title>
        <authorList>
            <person name="Klenk H.-P."/>
            <person name="Clayton R.A."/>
            <person name="Tomb J.-F."/>
            <person name="White O."/>
            <person name="Nelson K.E."/>
            <person name="Ketchum K.A."/>
            <person name="Dodson R.J."/>
            <person name="Gwinn M.L."/>
            <person name="Hickey E.K."/>
            <person name="Peterson J.D."/>
            <person name="Richardson D.L."/>
            <person name="Kerlavage A.R."/>
            <person name="Graham D.E."/>
            <person name="Kyrpides N.C."/>
            <person name="Fleischmann R.D."/>
            <person name="Quackenbush J."/>
            <person name="Lee N.H."/>
            <person name="Sutton G.G."/>
            <person name="Gill S.R."/>
            <person name="Kirkness E.F."/>
            <person name="Dougherty B.A."/>
            <person name="McKenney K."/>
            <person name="Adams M.D."/>
            <person name="Loftus B.J."/>
            <person name="Peterson S.N."/>
            <person name="Reich C.I."/>
            <person name="McNeil L.K."/>
            <person name="Badger J.H."/>
            <person name="Glodek A."/>
            <person name="Zhou L."/>
            <person name="Overbeek R."/>
            <person name="Gocayne J.D."/>
            <person name="Weidman J.F."/>
            <person name="McDonald L.A."/>
            <person name="Utterback T.R."/>
            <person name="Cotton M.D."/>
            <person name="Spriggs T."/>
            <person name="Artiach P."/>
            <person name="Kaine B.P."/>
            <person name="Sykes S.M."/>
            <person name="Sadow P.W."/>
            <person name="D'Andrea K.P."/>
            <person name="Bowman C."/>
            <person name="Fujii C."/>
            <person name="Garland S.A."/>
            <person name="Mason T.M."/>
            <person name="Olsen G.J."/>
            <person name="Fraser C.M."/>
            <person name="Smith H.O."/>
            <person name="Woese C.R."/>
            <person name="Venter J.C."/>
        </authorList>
    </citation>
    <scope>NUCLEOTIDE SEQUENCE [LARGE SCALE GENOMIC DNA]</scope>
    <source>
        <strain>ATCC 49558 / DSM 4304 / JCM 9628 / NBRC 100126 / VC-16</strain>
    </source>
</reference>
<accession>O28496</accession>
<feature type="chain" id="PRO_0000157218" description="Putative septation protein SpoVG">
    <location>
        <begin position="1"/>
        <end position="85"/>
    </location>
</feature>
<proteinExistence type="inferred from homology"/>
<sequence>MAEITEVRIYKSKGNGSVKAYASVSFDNEFVVKGLKVVEGEKGLWVSMPSRRMKDGSFQDVFHPVSREARDKIVDAVLKAYQEQE</sequence>
<comment type="function">
    <text evidence="1">Could be involved in septation.</text>
</comment>
<comment type="similarity">
    <text evidence="1">Belongs to the SpoVG family.</text>
</comment>
<protein>
    <recommendedName>
        <fullName evidence="1">Putative septation protein SpoVG</fullName>
    </recommendedName>
</protein>
<gene>
    <name evidence="1" type="primary">spoVG</name>
    <name type="ordered locus">AF_1778</name>
</gene>
<dbReference type="EMBL" id="AE000782">
    <property type="protein sequence ID" value="AAB89469.1"/>
    <property type="molecule type" value="Genomic_DNA"/>
</dbReference>
<dbReference type="PIR" id="A69472">
    <property type="entry name" value="A69472"/>
</dbReference>
<dbReference type="RefSeq" id="WP_010879274.1">
    <property type="nucleotide sequence ID" value="NC_000917.1"/>
</dbReference>
<dbReference type="SMR" id="O28496"/>
<dbReference type="STRING" id="224325.AF_1778"/>
<dbReference type="PaxDb" id="224325-AF_1778"/>
<dbReference type="EnsemblBacteria" id="AAB89469">
    <property type="protein sequence ID" value="AAB89469"/>
    <property type="gene ID" value="AF_1778"/>
</dbReference>
<dbReference type="KEGG" id="afu:AF_1778"/>
<dbReference type="eggNOG" id="arCOG10230">
    <property type="taxonomic scope" value="Archaea"/>
</dbReference>
<dbReference type="HOGENOM" id="CLU_103669_2_0_2"/>
<dbReference type="OrthoDB" id="49467at2157"/>
<dbReference type="PhylomeDB" id="O28496"/>
<dbReference type="Proteomes" id="UP000002199">
    <property type="component" value="Chromosome"/>
</dbReference>
<dbReference type="GO" id="GO:0051301">
    <property type="term" value="P:cell division"/>
    <property type="evidence" value="ECO:0007669"/>
    <property type="project" value="UniProtKB-KW"/>
</dbReference>
<dbReference type="GO" id="GO:0030435">
    <property type="term" value="P:sporulation resulting in formation of a cellular spore"/>
    <property type="evidence" value="ECO:0007669"/>
    <property type="project" value="InterPro"/>
</dbReference>
<dbReference type="Gene3D" id="3.30.1120.40">
    <property type="entry name" value="Stage V sporulation protein G"/>
    <property type="match status" value="1"/>
</dbReference>
<dbReference type="HAMAP" id="MF_00819">
    <property type="entry name" value="SpoVG"/>
    <property type="match status" value="1"/>
</dbReference>
<dbReference type="InterPro" id="IPR007170">
    <property type="entry name" value="SpoVG"/>
</dbReference>
<dbReference type="InterPro" id="IPR036751">
    <property type="entry name" value="SpoVG_sf"/>
</dbReference>
<dbReference type="PANTHER" id="PTHR38429">
    <property type="entry name" value="SEPTATION PROTEIN SPOVG-RELATED"/>
    <property type="match status" value="1"/>
</dbReference>
<dbReference type="PANTHER" id="PTHR38429:SF1">
    <property type="entry name" value="SEPTATION PROTEIN SPOVG-RELATED"/>
    <property type="match status" value="1"/>
</dbReference>
<dbReference type="Pfam" id="PF04026">
    <property type="entry name" value="SpoVG"/>
    <property type="match status" value="1"/>
</dbReference>
<dbReference type="SUPFAM" id="SSF160537">
    <property type="entry name" value="SpoVG-like"/>
    <property type="match status" value="1"/>
</dbReference>
<name>SP5G_ARCFU</name>